<feature type="initiator methionine" description="Removed" evidence="4">
    <location>
        <position position="1"/>
    </location>
</feature>
<feature type="chain" id="PRO_0000052746" description="Hemoglobin subunit alpha-1/2">
    <location>
        <begin position="2"/>
        <end position="142"/>
    </location>
</feature>
<feature type="domain" description="Globin" evidence="3">
    <location>
        <begin position="2"/>
        <end position="142"/>
    </location>
</feature>
<feature type="binding site" evidence="3">
    <location>
        <position position="59"/>
    </location>
    <ligand>
        <name>O2</name>
        <dbReference type="ChEBI" id="CHEBI:15379"/>
    </ligand>
</feature>
<feature type="binding site" description="proximal binding residue" evidence="3">
    <location>
        <position position="88"/>
    </location>
    <ligand>
        <name>heme b</name>
        <dbReference type="ChEBI" id="CHEBI:60344"/>
    </ligand>
    <ligandPart>
        <name>Fe</name>
        <dbReference type="ChEBI" id="CHEBI:18248"/>
    </ligandPart>
</feature>
<feature type="modified residue" description="Phosphoserine" evidence="2">
    <location>
        <position position="4"/>
    </location>
</feature>
<feature type="modified residue" description="N6-succinyllysine" evidence="1">
    <location>
        <position position="8"/>
    </location>
</feature>
<feature type="modified residue" description="Phosphothreonine" evidence="2">
    <location>
        <position position="9"/>
    </location>
</feature>
<feature type="modified residue" description="N6-succinyllysine" evidence="1">
    <location>
        <position position="12"/>
    </location>
</feature>
<feature type="modified residue" description="N6-acetyllysine; alternate" evidence="2">
    <location>
        <position position="17"/>
    </location>
</feature>
<feature type="modified residue" description="N6-succinyllysine; alternate" evidence="1">
    <location>
        <position position="17"/>
    </location>
</feature>
<feature type="modified residue" description="Phosphotyrosine" evidence="2">
    <location>
        <position position="25"/>
    </location>
</feature>
<feature type="modified residue" description="N6-succinyllysine" evidence="1">
    <location>
        <position position="41"/>
    </location>
</feature>
<feature type="modified residue" description="Phosphoserine" evidence="1">
    <location>
        <position position="103"/>
    </location>
</feature>
<feature type="modified residue" description="Phosphothreonine" evidence="1">
    <location>
        <position position="109"/>
    </location>
</feature>
<feature type="modified residue" description="Phosphoserine" evidence="1">
    <location>
        <position position="125"/>
    </location>
</feature>
<feature type="modified residue" description="Phosphothreonine" evidence="1">
    <location>
        <position position="135"/>
    </location>
</feature>
<feature type="modified residue" description="Phosphothreonine" evidence="1">
    <location>
        <position position="138"/>
    </location>
</feature>
<feature type="modified residue" description="Phosphoserine" evidence="1">
    <location>
        <position position="139"/>
    </location>
</feature>
<feature type="sequence variant" description="In alpha-2." evidence="5">
    <original>V</original>
    <variation>L</variation>
    <location>
        <position position="30"/>
    </location>
</feature>
<feature type="sequence variant" description="In alpha-2." evidence="5">
    <original>FT</original>
    <variation>LS</variation>
    <location>
        <begin position="49"/>
        <end position="50"/>
    </location>
</feature>
<feature type="sequence conflict" description="In Ref. 4; AA sequence." evidence="6" ref="4">
    <original>E</original>
    <variation>Q</variation>
    <location>
        <position position="65"/>
    </location>
</feature>
<feature type="helix" evidence="7">
    <location>
        <begin position="5"/>
        <end position="18"/>
    </location>
</feature>
<feature type="helix" evidence="7">
    <location>
        <begin position="19"/>
        <end position="21"/>
    </location>
</feature>
<feature type="helix" evidence="7">
    <location>
        <begin position="22"/>
        <end position="36"/>
    </location>
</feature>
<feature type="helix" evidence="7">
    <location>
        <begin position="38"/>
        <end position="43"/>
    </location>
</feature>
<feature type="helix" evidence="7">
    <location>
        <begin position="54"/>
        <end position="71"/>
    </location>
</feature>
<feature type="helix" evidence="7">
    <location>
        <begin position="72"/>
        <end position="76"/>
    </location>
</feature>
<feature type="helix" evidence="7">
    <location>
        <begin position="77"/>
        <end position="80"/>
    </location>
</feature>
<feature type="helix" evidence="7">
    <location>
        <begin position="82"/>
        <end position="89"/>
    </location>
</feature>
<feature type="turn" evidence="7">
    <location>
        <begin position="90"/>
        <end position="92"/>
    </location>
</feature>
<feature type="helix" evidence="7">
    <location>
        <begin position="97"/>
        <end position="113"/>
    </location>
</feature>
<feature type="turn" evidence="7">
    <location>
        <begin position="115"/>
        <end position="117"/>
    </location>
</feature>
<feature type="helix" evidence="7">
    <location>
        <begin position="120"/>
        <end position="137"/>
    </location>
</feature>
<keyword id="KW-0002">3D-structure</keyword>
<keyword id="KW-0007">Acetylation</keyword>
<keyword id="KW-0903">Direct protein sequencing</keyword>
<keyword id="KW-0349">Heme</keyword>
<keyword id="KW-0408">Iron</keyword>
<keyword id="KW-0479">Metal-binding</keyword>
<keyword id="KW-0561">Oxygen transport</keyword>
<keyword id="KW-0597">Phosphoprotein</keyword>
<keyword id="KW-1185">Reference proteome</keyword>
<keyword id="KW-0813">Transport</keyword>
<accession>P01948</accession>
<dbReference type="EMBL" id="X04751">
    <property type="protein sequence ID" value="CAA28447.1"/>
    <property type="molecule type" value="Genomic_DNA"/>
</dbReference>
<dbReference type="EMBL" id="M11113">
    <property type="protein sequence ID" value="AAA31267.1"/>
    <property type="molecule type" value="Genomic_DNA"/>
</dbReference>
<dbReference type="EMBL" id="V00875">
    <property type="protein sequence ID" value="CAA24244.2"/>
    <property type="molecule type" value="mRNA"/>
</dbReference>
<dbReference type="EMBL" id="M10467">
    <property type="protein sequence ID" value="AAA31263.1"/>
    <property type="molecule type" value="mRNA"/>
</dbReference>
<dbReference type="EMBL" id="M10846">
    <property type="protein sequence ID" value="AAA31266.1"/>
    <property type="molecule type" value="mRNA"/>
</dbReference>
<dbReference type="EMBL" id="M15847">
    <property type="protein sequence ID" value="AAA31264.1"/>
    <property type="molecule type" value="Genomic_DNA"/>
</dbReference>
<dbReference type="PIR" id="A25625">
    <property type="entry name" value="HARB"/>
</dbReference>
<dbReference type="RefSeq" id="NP_001075858.1">
    <property type="nucleotide sequence ID" value="NM_001082389.2"/>
</dbReference>
<dbReference type="PDB" id="2RAO">
    <property type="method" value="X-ray"/>
    <property type="resolution" value="2.00 A"/>
    <property type="chains" value="A/C=2-142"/>
</dbReference>
<dbReference type="PDBsum" id="2RAO"/>
<dbReference type="SMR" id="P01948"/>
<dbReference type="FunCoup" id="P01948">
    <property type="interactions" value="4"/>
</dbReference>
<dbReference type="GeneID" id="100009249"/>
<dbReference type="KEGG" id="ocu:100009249"/>
<dbReference type="CTD" id="15121"/>
<dbReference type="InParanoid" id="P01948"/>
<dbReference type="OrthoDB" id="8751793at2759"/>
<dbReference type="EvolutionaryTrace" id="P01948"/>
<dbReference type="Proteomes" id="UP000001811">
    <property type="component" value="Unplaced"/>
</dbReference>
<dbReference type="GO" id="GO:0072562">
    <property type="term" value="C:blood microparticle"/>
    <property type="evidence" value="ECO:0007669"/>
    <property type="project" value="TreeGrafter"/>
</dbReference>
<dbReference type="GO" id="GO:0031838">
    <property type="term" value="C:haptoglobin-hemoglobin complex"/>
    <property type="evidence" value="ECO:0007669"/>
    <property type="project" value="TreeGrafter"/>
</dbReference>
<dbReference type="GO" id="GO:0005833">
    <property type="term" value="C:hemoglobin complex"/>
    <property type="evidence" value="ECO:0007669"/>
    <property type="project" value="InterPro"/>
</dbReference>
<dbReference type="GO" id="GO:0031720">
    <property type="term" value="F:haptoglobin binding"/>
    <property type="evidence" value="ECO:0007669"/>
    <property type="project" value="TreeGrafter"/>
</dbReference>
<dbReference type="GO" id="GO:0020037">
    <property type="term" value="F:heme binding"/>
    <property type="evidence" value="ECO:0007669"/>
    <property type="project" value="InterPro"/>
</dbReference>
<dbReference type="GO" id="GO:0005506">
    <property type="term" value="F:iron ion binding"/>
    <property type="evidence" value="ECO:0007669"/>
    <property type="project" value="InterPro"/>
</dbReference>
<dbReference type="GO" id="GO:0043177">
    <property type="term" value="F:organic acid binding"/>
    <property type="evidence" value="ECO:0007669"/>
    <property type="project" value="TreeGrafter"/>
</dbReference>
<dbReference type="GO" id="GO:0019825">
    <property type="term" value="F:oxygen binding"/>
    <property type="evidence" value="ECO:0007669"/>
    <property type="project" value="InterPro"/>
</dbReference>
<dbReference type="GO" id="GO:0005344">
    <property type="term" value="F:oxygen carrier activity"/>
    <property type="evidence" value="ECO:0007669"/>
    <property type="project" value="UniProtKB-KW"/>
</dbReference>
<dbReference type="GO" id="GO:0004601">
    <property type="term" value="F:peroxidase activity"/>
    <property type="evidence" value="ECO:0007669"/>
    <property type="project" value="TreeGrafter"/>
</dbReference>
<dbReference type="GO" id="GO:0042744">
    <property type="term" value="P:hydrogen peroxide catabolic process"/>
    <property type="evidence" value="ECO:0007669"/>
    <property type="project" value="TreeGrafter"/>
</dbReference>
<dbReference type="GO" id="GO:0006417">
    <property type="term" value="P:regulation of translation"/>
    <property type="evidence" value="ECO:0000314"/>
    <property type="project" value="UniProtKB"/>
</dbReference>
<dbReference type="CDD" id="cd08927">
    <property type="entry name" value="Hb-alpha-like"/>
    <property type="match status" value="1"/>
</dbReference>
<dbReference type="FunFam" id="1.10.490.10:FF:000002">
    <property type="entry name" value="Hemoglobin subunit alpha"/>
    <property type="match status" value="1"/>
</dbReference>
<dbReference type="Gene3D" id="1.10.490.10">
    <property type="entry name" value="Globins"/>
    <property type="match status" value="1"/>
</dbReference>
<dbReference type="InterPro" id="IPR000971">
    <property type="entry name" value="Globin"/>
</dbReference>
<dbReference type="InterPro" id="IPR009050">
    <property type="entry name" value="Globin-like_sf"/>
</dbReference>
<dbReference type="InterPro" id="IPR012292">
    <property type="entry name" value="Globin/Proto"/>
</dbReference>
<dbReference type="InterPro" id="IPR002338">
    <property type="entry name" value="Hemoglobin_a-typ"/>
</dbReference>
<dbReference type="InterPro" id="IPR050056">
    <property type="entry name" value="Hemoglobin_oxygen_transport"/>
</dbReference>
<dbReference type="InterPro" id="IPR002339">
    <property type="entry name" value="Hemoglobin_pi"/>
</dbReference>
<dbReference type="PANTHER" id="PTHR11442">
    <property type="entry name" value="HEMOGLOBIN FAMILY MEMBER"/>
    <property type="match status" value="1"/>
</dbReference>
<dbReference type="PANTHER" id="PTHR11442:SF48">
    <property type="entry name" value="HEMOGLOBIN SUBUNIT ALPHA"/>
    <property type="match status" value="1"/>
</dbReference>
<dbReference type="Pfam" id="PF00042">
    <property type="entry name" value="Globin"/>
    <property type="match status" value="1"/>
</dbReference>
<dbReference type="PRINTS" id="PR00612">
    <property type="entry name" value="ALPHAHAEM"/>
</dbReference>
<dbReference type="PRINTS" id="PR00815">
    <property type="entry name" value="PIHAEM"/>
</dbReference>
<dbReference type="SUPFAM" id="SSF46458">
    <property type="entry name" value="Globin-like"/>
    <property type="match status" value="1"/>
</dbReference>
<dbReference type="PROSITE" id="PS01033">
    <property type="entry name" value="GLOBIN"/>
    <property type="match status" value="1"/>
</dbReference>
<proteinExistence type="evidence at protein level"/>
<comment type="function">
    <text>Involved in oxygen transport from the lung to the various peripheral tissues.</text>
</comment>
<comment type="subunit">
    <text>Heterotetramer of two alpha chains and two beta chains.</text>
</comment>
<comment type="tissue specificity">
    <text>Red blood cells.</text>
</comment>
<comment type="polymorphism">
    <text evidence="5">There are two alleles. The sequence shown is that of alpha-1.</text>
</comment>
<comment type="similarity">
    <text evidence="3">Belongs to the globin family.</text>
</comment>
<reference key="1">
    <citation type="journal article" date="1986" name="J. Biol. Chem.">
        <title>Isolation and nucleotide sequence of the rabbit globin gene cluster psi zeta-alpha 1-psi alpha. Absence of a pair of alpha-globin genes evolving in concert.</title>
        <authorList>
            <person name="Cheng J.-F."/>
            <person name="Raid L."/>
            <person name="Hardison R.C."/>
        </authorList>
    </citation>
    <scope>NUCLEOTIDE SEQUENCE [GENOMIC DNA] (ALPHA-1)</scope>
</reference>
<reference key="2">
    <citation type="journal article" date="1978" name="Cell">
        <title>The primary sequence of rabbit alpha-globin mRNA.</title>
        <authorList>
            <person name="Heindell H.C."/>
            <person name="Liu A."/>
            <person name="Paddock G.V."/>
            <person name="Studnicka G.M."/>
            <person name="Salser W.A."/>
        </authorList>
    </citation>
    <scope>NUCLEOTIDE SEQUENCE [MRNA] OF 1-121</scope>
</reference>
<reference key="3">
    <citation type="journal article" date="1980" name="Cell">
        <title>Secondary structure of mouse and rabbit alpha- and beta-globin mRNAs: differential accessibility of alpha and beta initiator AUG codons towards nucleases.</title>
        <authorList>
            <person name="Pavlakis G.N."/>
            <person name="Lockard R.E."/>
            <person name="Vamvakopoulos N."/>
            <person name="Rieser L."/>
            <person name="RajBhandary U.L."/>
            <person name="Vournakis J.N."/>
        </authorList>
    </citation>
    <scope>NUCLEOTIDE SEQUENCE [MRNA] OF 1-41</scope>
</reference>
<reference key="4">
    <citation type="journal article" date="1968" name="Hoppe-Seyler's Z. Physiol. Chem.">
        <title>Phylogeny of hemoglobins: the constitution of the alpha-chain of rabbit hemoglobin.</title>
        <authorList>
            <person name="Braunitzer G."/>
            <person name="Flamm U."/>
            <person name="Best J.S."/>
            <person name="Schrank B."/>
        </authorList>
    </citation>
    <scope>PROTEIN SEQUENCE OF 2-142</scope>
</reference>
<reference key="5">
    <citation type="journal article" date="1977" name="Science">
        <title>Nucleotide sequences from a rabbit alpha globin gene inserted in a chimeric plasmid.</title>
        <authorList>
            <person name="Liu A.Y."/>
            <person name="Paddock G.V."/>
            <person name="Heindell H.C."/>
            <person name="Salser W."/>
        </authorList>
    </citation>
    <scope>NUCLEOTIDE SEQUENCE [MRNA] OF 79-104</scope>
</reference>
<reference key="6">
    <citation type="journal article" date="1977" name="Cell">
        <title>Nucleotide sequence of the 3' terminal third of rabbit alpha-globin messenger RNA: comparison with human alpha-globin messenger RNA.</title>
        <authorList>
            <person name="Proudfoot N.J."/>
            <person name="Gillam S."/>
            <person name="Smith M."/>
            <person name="Longley J.I."/>
        </authorList>
    </citation>
    <scope>NUCLEOTIDE SEQUENCE [MRNA] OF 108-142</scope>
</reference>
<reference key="7">
    <citation type="journal article" date="1987" name="J. Biol. Chem.">
        <title>Block duplications of a zeta-zeta-alpha-theta gene set in the rabbit alpha-like globin gene cluster.</title>
        <authorList>
            <person name="Cheng J.F.F."/>
            <person name="Raid L."/>
            <person name="Hardison R.C."/>
        </authorList>
    </citation>
    <scope>NUCLEOTIDE SEQUENCE [GENOMIC DNA] OF 116-142</scope>
</reference>
<reference key="8">
    <citation type="journal article" date="1969" name="Nature">
        <title>Allelic variants in the amino-acid sequence of the alpha chain of rabbit haemoglobin.</title>
        <authorList>
            <person name="Hunter T."/>
            <person name="Munro A."/>
        </authorList>
    </citation>
    <scope>VARIANTS</scope>
    <source>
        <strain>Lop ear Dutch</strain>
    </source>
</reference>
<evidence type="ECO:0000250" key="1">
    <source>
        <dbReference type="UniProtKB" id="P01942"/>
    </source>
</evidence>
<evidence type="ECO:0000250" key="2">
    <source>
        <dbReference type="UniProtKB" id="P69905"/>
    </source>
</evidence>
<evidence type="ECO:0000255" key="3">
    <source>
        <dbReference type="PROSITE-ProRule" id="PRU00238"/>
    </source>
</evidence>
<evidence type="ECO:0000269" key="4">
    <source>
    </source>
</evidence>
<evidence type="ECO:0000269" key="5">
    <source>
    </source>
</evidence>
<evidence type="ECO:0000305" key="6"/>
<evidence type="ECO:0007829" key="7">
    <source>
        <dbReference type="PDB" id="2RAO"/>
    </source>
</evidence>
<protein>
    <recommendedName>
        <fullName>Hemoglobin subunit alpha-1/2</fullName>
    </recommendedName>
    <alternativeName>
        <fullName>Alpha-1/2-globin</fullName>
    </alternativeName>
    <alternativeName>
        <fullName>Hemoglobin alpha-1/2 chain</fullName>
    </alternativeName>
</protein>
<organism>
    <name type="scientific">Oryctolagus cuniculus</name>
    <name type="common">Rabbit</name>
    <dbReference type="NCBI Taxonomy" id="9986"/>
    <lineage>
        <taxon>Eukaryota</taxon>
        <taxon>Metazoa</taxon>
        <taxon>Chordata</taxon>
        <taxon>Craniata</taxon>
        <taxon>Vertebrata</taxon>
        <taxon>Euteleostomi</taxon>
        <taxon>Mammalia</taxon>
        <taxon>Eutheria</taxon>
        <taxon>Euarchontoglires</taxon>
        <taxon>Glires</taxon>
        <taxon>Lagomorpha</taxon>
        <taxon>Leporidae</taxon>
        <taxon>Oryctolagus</taxon>
    </lineage>
</organism>
<name>HBA_RABIT</name>
<sequence length="142" mass="15589">MVLSPADKTNIKTAWEKIGSHGGEYGAEAVERMFLGFPTTKTYFPHFDFTHGSEQIKAHGKKVSEALTKAVGHLDDLPGALSTLSDLHAHKLRVDPVNFKLLSHCLLVTLANHHPSEFTPAVHASLDKFLANVSTVLTSKYR</sequence>